<reference key="1">
    <citation type="journal article" date="2009" name="PLoS Genet.">
        <title>Organised genome dynamics in the Escherichia coli species results in highly diverse adaptive paths.</title>
        <authorList>
            <person name="Touchon M."/>
            <person name="Hoede C."/>
            <person name="Tenaillon O."/>
            <person name="Barbe V."/>
            <person name="Baeriswyl S."/>
            <person name="Bidet P."/>
            <person name="Bingen E."/>
            <person name="Bonacorsi S."/>
            <person name="Bouchier C."/>
            <person name="Bouvet O."/>
            <person name="Calteau A."/>
            <person name="Chiapello H."/>
            <person name="Clermont O."/>
            <person name="Cruveiller S."/>
            <person name="Danchin A."/>
            <person name="Diard M."/>
            <person name="Dossat C."/>
            <person name="Karoui M.E."/>
            <person name="Frapy E."/>
            <person name="Garry L."/>
            <person name="Ghigo J.M."/>
            <person name="Gilles A.M."/>
            <person name="Johnson J."/>
            <person name="Le Bouguenec C."/>
            <person name="Lescat M."/>
            <person name="Mangenot S."/>
            <person name="Martinez-Jehanne V."/>
            <person name="Matic I."/>
            <person name="Nassif X."/>
            <person name="Oztas S."/>
            <person name="Petit M.A."/>
            <person name="Pichon C."/>
            <person name="Rouy Z."/>
            <person name="Ruf C.S."/>
            <person name="Schneider D."/>
            <person name="Tourret J."/>
            <person name="Vacherie B."/>
            <person name="Vallenet D."/>
            <person name="Medigue C."/>
            <person name="Rocha E.P.C."/>
            <person name="Denamur E."/>
        </authorList>
    </citation>
    <scope>NUCLEOTIDE SEQUENCE [LARGE SCALE GENOMIC DNA]</scope>
    <source>
        <strain>ATCC 35469 / DSM 13698 / BCRC 15582 / CCUG 18766 / IAM 14443 / JCM 21226 / LMG 7866 / NBRC 102419 / NCTC 12128 / CDC 0568-73</strain>
    </source>
</reference>
<comment type="function">
    <text evidence="1">Catalyzes the hydrolysis of N(2)-succinylarginine into N(2)-succinylornithine, ammonia and CO(2).</text>
</comment>
<comment type="catalytic activity">
    <reaction evidence="1">
        <text>N(2)-succinyl-L-arginine + 2 H2O + 2 H(+) = N(2)-succinyl-L-ornithine + 2 NH4(+) + CO2</text>
        <dbReference type="Rhea" id="RHEA:19533"/>
        <dbReference type="ChEBI" id="CHEBI:15377"/>
        <dbReference type="ChEBI" id="CHEBI:15378"/>
        <dbReference type="ChEBI" id="CHEBI:16526"/>
        <dbReference type="ChEBI" id="CHEBI:28938"/>
        <dbReference type="ChEBI" id="CHEBI:58241"/>
        <dbReference type="ChEBI" id="CHEBI:58514"/>
        <dbReference type="EC" id="3.5.3.23"/>
    </reaction>
</comment>
<comment type="pathway">
    <text evidence="1">Amino-acid degradation; L-arginine degradation via AST pathway; L-glutamate and succinate from L-arginine: step 2/5.</text>
</comment>
<comment type="subunit">
    <text evidence="1">Homodimer.</text>
</comment>
<comment type="similarity">
    <text evidence="1">Belongs to the succinylarginine dihydrolase family.</text>
</comment>
<accession>B7LQ47</accession>
<keyword id="KW-0056">Arginine metabolism</keyword>
<keyword id="KW-0378">Hydrolase</keyword>
<feature type="chain" id="PRO_1000138018" description="N-succinylarginine dihydrolase">
    <location>
        <begin position="1"/>
        <end position="447"/>
    </location>
</feature>
<feature type="active site" evidence="1">
    <location>
        <position position="174"/>
    </location>
</feature>
<feature type="active site" evidence="1">
    <location>
        <position position="248"/>
    </location>
</feature>
<feature type="active site" description="Nucleophile" evidence="1">
    <location>
        <position position="365"/>
    </location>
</feature>
<feature type="binding site" evidence="1">
    <location>
        <begin position="19"/>
        <end position="28"/>
    </location>
    <ligand>
        <name>substrate</name>
    </ligand>
</feature>
<feature type="binding site" evidence="1">
    <location>
        <position position="110"/>
    </location>
    <ligand>
        <name>substrate</name>
    </ligand>
</feature>
<feature type="binding site" evidence="1">
    <location>
        <begin position="137"/>
        <end position="138"/>
    </location>
    <ligand>
        <name>substrate</name>
    </ligand>
</feature>
<feature type="binding site" evidence="1">
    <location>
        <position position="212"/>
    </location>
    <ligand>
        <name>substrate</name>
    </ligand>
</feature>
<feature type="binding site" evidence="1">
    <location>
        <position position="250"/>
    </location>
    <ligand>
        <name>substrate</name>
    </ligand>
</feature>
<feature type="binding site" evidence="1">
    <location>
        <position position="359"/>
    </location>
    <ligand>
        <name>substrate</name>
    </ligand>
</feature>
<dbReference type="EC" id="3.5.3.23" evidence="1"/>
<dbReference type="EMBL" id="CU928158">
    <property type="protein sequence ID" value="CAQ88844.1"/>
    <property type="molecule type" value="Genomic_DNA"/>
</dbReference>
<dbReference type="RefSeq" id="WP_000995022.1">
    <property type="nucleotide sequence ID" value="NC_011740.1"/>
</dbReference>
<dbReference type="SMR" id="B7LQ47"/>
<dbReference type="GeneID" id="75057636"/>
<dbReference type="KEGG" id="efe:EFER_1320"/>
<dbReference type="HOGENOM" id="CLU_053835_0_0_6"/>
<dbReference type="OrthoDB" id="248552at2"/>
<dbReference type="UniPathway" id="UPA00185">
    <property type="reaction ID" value="UER00280"/>
</dbReference>
<dbReference type="Proteomes" id="UP000000745">
    <property type="component" value="Chromosome"/>
</dbReference>
<dbReference type="GO" id="GO:0009015">
    <property type="term" value="F:N-succinylarginine dihydrolase activity"/>
    <property type="evidence" value="ECO:0007669"/>
    <property type="project" value="UniProtKB-UniRule"/>
</dbReference>
<dbReference type="GO" id="GO:0019544">
    <property type="term" value="P:arginine catabolic process to glutamate"/>
    <property type="evidence" value="ECO:0007669"/>
    <property type="project" value="UniProtKB-UniRule"/>
</dbReference>
<dbReference type="GO" id="GO:0019545">
    <property type="term" value="P:arginine catabolic process to succinate"/>
    <property type="evidence" value="ECO:0007669"/>
    <property type="project" value="UniProtKB-UniRule"/>
</dbReference>
<dbReference type="FunFam" id="3.75.10.20:FF:000001">
    <property type="entry name" value="N-succinylarginine dihydrolase"/>
    <property type="match status" value="1"/>
</dbReference>
<dbReference type="Gene3D" id="3.75.10.20">
    <property type="entry name" value="Succinylarginine dihydrolase"/>
    <property type="match status" value="1"/>
</dbReference>
<dbReference type="HAMAP" id="MF_01172">
    <property type="entry name" value="AstB"/>
    <property type="match status" value="1"/>
</dbReference>
<dbReference type="InterPro" id="IPR037031">
    <property type="entry name" value="AstB_sf"/>
</dbReference>
<dbReference type="InterPro" id="IPR007079">
    <property type="entry name" value="SuccinylArg_d-Hdrlase_AstB"/>
</dbReference>
<dbReference type="NCBIfam" id="TIGR03241">
    <property type="entry name" value="arg_catab_astB"/>
    <property type="match status" value="1"/>
</dbReference>
<dbReference type="NCBIfam" id="NF009789">
    <property type="entry name" value="PRK13281.1"/>
    <property type="match status" value="1"/>
</dbReference>
<dbReference type="PANTHER" id="PTHR30420">
    <property type="entry name" value="N-SUCCINYLARGININE DIHYDROLASE"/>
    <property type="match status" value="1"/>
</dbReference>
<dbReference type="PANTHER" id="PTHR30420:SF2">
    <property type="entry name" value="N-SUCCINYLARGININE DIHYDROLASE"/>
    <property type="match status" value="1"/>
</dbReference>
<dbReference type="Pfam" id="PF04996">
    <property type="entry name" value="AstB"/>
    <property type="match status" value="1"/>
</dbReference>
<dbReference type="SUPFAM" id="SSF55909">
    <property type="entry name" value="Pentein"/>
    <property type="match status" value="1"/>
</dbReference>
<evidence type="ECO:0000255" key="1">
    <source>
        <dbReference type="HAMAP-Rule" id="MF_01172"/>
    </source>
</evidence>
<proteinExistence type="inferred from homology"/>
<gene>
    <name evidence="1" type="primary">astB</name>
    <name type="ordered locus">EFER_1320</name>
</gene>
<protein>
    <recommendedName>
        <fullName evidence="1">N-succinylarginine dihydrolase</fullName>
        <ecNumber evidence="1">3.5.3.23</ecNumber>
    </recommendedName>
</protein>
<name>ASTB_ESCF3</name>
<organism>
    <name type="scientific">Escherichia fergusonii (strain ATCC 35469 / DSM 13698 / CCUG 18766 / IAM 14443 / JCM 21226 / LMG 7866 / NBRC 102419 / NCTC 12128 / CDC 0568-73)</name>
    <dbReference type="NCBI Taxonomy" id="585054"/>
    <lineage>
        <taxon>Bacteria</taxon>
        <taxon>Pseudomonadati</taxon>
        <taxon>Pseudomonadota</taxon>
        <taxon>Gammaproteobacteria</taxon>
        <taxon>Enterobacterales</taxon>
        <taxon>Enterobacteriaceae</taxon>
        <taxon>Escherichia</taxon>
    </lineage>
</organism>
<sequence>MNAWEVNFDGLVGLTHHYAGLSFGNEASTSHRFQVSNPRLAAKQGLLKMKALADLGFPQAVIPPHERPFIPVLRQLGFSGSDEQVLEKVARQAPHWLSSVSSASPMWVANAATVAPSADTLDGKVHLTVANLNNKFHRSLEAPVTESLLKAIFNEEKKFAIHSALPQVALLGDEGAANHNRLGGHYGEPGIQLFVYGREEGNVSRPSRYPARQTREASEAVARLNQVNPQQVIFAQQNPDVIDQGVFHNDVIAVSNRQVLFCHQQAFARQAQLLANLRSRVNGFMAIEVPATQVSVSDAVSTYLFNSQLLSRDDGSMMLVLPQECREHAGVWGYLNELLAADNPIRELKVFDLRESMANGGGPACLRLRVVLTEEERRAVNPAVMMNDTLFNALNDWVERYYRDRLTAADLADPLLLREGREALDVLSQLLNLGSVYPFQREGGGNG</sequence>